<reference key="1">
    <citation type="journal article" date="2002" name="Nature">
        <title>Sequence and analysis of chromosome 2 of Dictyostelium discoideum.</title>
        <authorList>
            <person name="Gloeckner G."/>
            <person name="Eichinger L."/>
            <person name="Szafranski K."/>
            <person name="Pachebat J.A."/>
            <person name="Bankier A.T."/>
            <person name="Dear P.H."/>
            <person name="Lehmann R."/>
            <person name="Baumgart C."/>
            <person name="Parra G."/>
            <person name="Abril J.F."/>
            <person name="Guigo R."/>
            <person name="Kumpf K."/>
            <person name="Tunggal B."/>
            <person name="Cox E.C."/>
            <person name="Quail M.A."/>
            <person name="Platzer M."/>
            <person name="Rosenthal A."/>
            <person name="Noegel A.A."/>
        </authorList>
    </citation>
    <scope>NUCLEOTIDE SEQUENCE [LARGE SCALE GENOMIC DNA]</scope>
    <source>
        <strain>AX4</strain>
    </source>
</reference>
<reference evidence="7" key="2">
    <citation type="journal article" date="2005" name="Nature">
        <title>The genome of the social amoeba Dictyostelium discoideum.</title>
        <authorList>
            <person name="Eichinger L."/>
            <person name="Pachebat J.A."/>
            <person name="Gloeckner G."/>
            <person name="Rajandream M.A."/>
            <person name="Sucgang R."/>
            <person name="Berriman M."/>
            <person name="Song J."/>
            <person name="Olsen R."/>
            <person name="Szafranski K."/>
            <person name="Xu Q."/>
            <person name="Tunggal B."/>
            <person name="Kummerfeld S."/>
            <person name="Madera M."/>
            <person name="Konfortov B.A."/>
            <person name="Rivero F."/>
            <person name="Bankier A.T."/>
            <person name="Lehmann R."/>
            <person name="Hamlin N."/>
            <person name="Davies R."/>
            <person name="Gaudet P."/>
            <person name="Fey P."/>
            <person name="Pilcher K."/>
            <person name="Chen G."/>
            <person name="Saunders D."/>
            <person name="Sodergren E.J."/>
            <person name="Davis P."/>
            <person name="Kerhornou A."/>
            <person name="Nie X."/>
            <person name="Hall N."/>
            <person name="Anjard C."/>
            <person name="Hemphill L."/>
            <person name="Bason N."/>
            <person name="Farbrother P."/>
            <person name="Desany B."/>
            <person name="Just E."/>
            <person name="Morio T."/>
            <person name="Rost R."/>
            <person name="Churcher C.M."/>
            <person name="Cooper J."/>
            <person name="Haydock S."/>
            <person name="van Driessche N."/>
            <person name="Cronin A."/>
            <person name="Goodhead I."/>
            <person name="Muzny D.M."/>
            <person name="Mourier T."/>
            <person name="Pain A."/>
            <person name="Lu M."/>
            <person name="Harper D."/>
            <person name="Lindsay R."/>
            <person name="Hauser H."/>
            <person name="James K.D."/>
            <person name="Quiles M."/>
            <person name="Madan Babu M."/>
            <person name="Saito T."/>
            <person name="Buchrieser C."/>
            <person name="Wardroper A."/>
            <person name="Felder M."/>
            <person name="Thangavelu M."/>
            <person name="Johnson D."/>
            <person name="Knights A."/>
            <person name="Loulseged H."/>
            <person name="Mungall K.L."/>
            <person name="Oliver K."/>
            <person name="Price C."/>
            <person name="Quail M.A."/>
            <person name="Urushihara H."/>
            <person name="Hernandez J."/>
            <person name="Rabbinowitsch E."/>
            <person name="Steffen D."/>
            <person name="Sanders M."/>
            <person name="Ma J."/>
            <person name="Kohara Y."/>
            <person name="Sharp S."/>
            <person name="Simmonds M.N."/>
            <person name="Spiegler S."/>
            <person name="Tivey A."/>
            <person name="Sugano S."/>
            <person name="White B."/>
            <person name="Walker D."/>
            <person name="Woodward J.R."/>
            <person name="Winckler T."/>
            <person name="Tanaka Y."/>
            <person name="Shaulsky G."/>
            <person name="Schleicher M."/>
            <person name="Weinstock G.M."/>
            <person name="Rosenthal A."/>
            <person name="Cox E.C."/>
            <person name="Chisholm R.L."/>
            <person name="Gibbs R.A."/>
            <person name="Loomis W.F."/>
            <person name="Platzer M."/>
            <person name="Kay R.R."/>
            <person name="Williams J.G."/>
            <person name="Dear P.H."/>
            <person name="Noegel A.A."/>
            <person name="Barrell B.G."/>
            <person name="Kuspa A."/>
        </authorList>
    </citation>
    <scope>NUCLEOTIDE SEQUENCE [LARGE SCALE GENOMIC DNA]</scope>
    <source>
        <strain evidence="7">AX4</strain>
    </source>
</reference>
<name>FNKA_DICDI</name>
<organism>
    <name type="scientific">Dictyostelium discoideum</name>
    <name type="common">Social amoeba</name>
    <dbReference type="NCBI Taxonomy" id="44689"/>
    <lineage>
        <taxon>Eukaryota</taxon>
        <taxon>Amoebozoa</taxon>
        <taxon>Evosea</taxon>
        <taxon>Eumycetozoa</taxon>
        <taxon>Dictyostelia</taxon>
        <taxon>Dictyosteliales</taxon>
        <taxon>Dictyosteliaceae</taxon>
        <taxon>Dictyostelium</taxon>
    </lineage>
</organism>
<evidence type="ECO:0000250" key="1">
    <source>
        <dbReference type="UniProtKB" id="P28523"/>
    </source>
</evidence>
<evidence type="ECO:0000250" key="2">
    <source>
        <dbReference type="UniProtKB" id="Q869N2"/>
    </source>
</evidence>
<evidence type="ECO:0000250" key="3">
    <source>
        <dbReference type="UniProtKB" id="Q8T126"/>
    </source>
</evidence>
<evidence type="ECO:0000255" key="4"/>
<evidence type="ECO:0000255" key="5">
    <source>
        <dbReference type="PROSITE-ProRule" id="PRU00159"/>
    </source>
</evidence>
<evidence type="ECO:0000255" key="6">
    <source>
        <dbReference type="PROSITE-ProRule" id="PRU10027"/>
    </source>
</evidence>
<evidence type="ECO:0000312" key="7">
    <source>
        <dbReference type="EMBL" id="EAL69531.1"/>
    </source>
</evidence>
<comment type="catalytic activity">
    <reaction evidence="2">
        <text>L-seryl-[protein] + ATP = O-phospho-L-seryl-[protein] + ADP + H(+)</text>
        <dbReference type="Rhea" id="RHEA:17989"/>
        <dbReference type="Rhea" id="RHEA-COMP:9863"/>
        <dbReference type="Rhea" id="RHEA-COMP:11604"/>
        <dbReference type="ChEBI" id="CHEBI:15378"/>
        <dbReference type="ChEBI" id="CHEBI:29999"/>
        <dbReference type="ChEBI" id="CHEBI:30616"/>
        <dbReference type="ChEBI" id="CHEBI:83421"/>
        <dbReference type="ChEBI" id="CHEBI:456216"/>
        <dbReference type="EC" id="2.7.11.1"/>
    </reaction>
</comment>
<comment type="catalytic activity">
    <reaction evidence="2">
        <text>L-threonyl-[protein] + ATP = O-phospho-L-threonyl-[protein] + ADP + H(+)</text>
        <dbReference type="Rhea" id="RHEA:46608"/>
        <dbReference type="Rhea" id="RHEA-COMP:11060"/>
        <dbReference type="Rhea" id="RHEA-COMP:11605"/>
        <dbReference type="ChEBI" id="CHEBI:15378"/>
        <dbReference type="ChEBI" id="CHEBI:30013"/>
        <dbReference type="ChEBI" id="CHEBI:30616"/>
        <dbReference type="ChEBI" id="CHEBI:61977"/>
        <dbReference type="ChEBI" id="CHEBI:456216"/>
        <dbReference type="EC" id="2.7.11.1"/>
    </reaction>
</comment>
<comment type="cofactor">
    <cofactor evidence="2">
        <name>Mg(2+)</name>
        <dbReference type="ChEBI" id="CHEBI:18420"/>
    </cofactor>
</comment>
<comment type="similarity">
    <text evidence="4">Belongs to the protein kinase superfamily. STE Ser/Thr protein kinase family.</text>
</comment>
<proteinExistence type="inferred from homology"/>
<dbReference type="EC" id="2.7.11.1"/>
<dbReference type="EMBL" id="AAFI02000013">
    <property type="protein sequence ID" value="EAL69531.1"/>
    <property type="molecule type" value="Genomic_DNA"/>
</dbReference>
<dbReference type="RefSeq" id="XP_643456.1">
    <property type="nucleotide sequence ID" value="XM_638364.1"/>
</dbReference>
<dbReference type="SMR" id="Q869L4"/>
<dbReference type="FunCoup" id="Q869L4">
    <property type="interactions" value="642"/>
</dbReference>
<dbReference type="STRING" id="44689.Q869L4"/>
<dbReference type="PaxDb" id="44689-DDB0216322"/>
<dbReference type="EnsemblProtists" id="EAL69531">
    <property type="protein sequence ID" value="EAL69531"/>
    <property type="gene ID" value="DDB_G0275561"/>
</dbReference>
<dbReference type="GeneID" id="8620041"/>
<dbReference type="KEGG" id="ddi:DDB_G0275561"/>
<dbReference type="dictyBase" id="DDB_G0275561">
    <property type="gene designation" value="fnkA"/>
</dbReference>
<dbReference type="VEuPathDB" id="AmoebaDB:DDB_G0275561"/>
<dbReference type="eggNOG" id="KOG4645">
    <property type="taxonomic scope" value="Eukaryota"/>
</dbReference>
<dbReference type="HOGENOM" id="CLU_354285_0_0_1"/>
<dbReference type="InParanoid" id="Q869L4"/>
<dbReference type="OMA" id="QEWEINT"/>
<dbReference type="PhylomeDB" id="Q869L4"/>
<dbReference type="PRO" id="PR:Q869L4"/>
<dbReference type="Proteomes" id="UP000002195">
    <property type="component" value="Chromosome 2"/>
</dbReference>
<dbReference type="GO" id="GO:0005524">
    <property type="term" value="F:ATP binding"/>
    <property type="evidence" value="ECO:0007669"/>
    <property type="project" value="UniProtKB-KW"/>
</dbReference>
<dbReference type="GO" id="GO:0046872">
    <property type="term" value="F:metal ion binding"/>
    <property type="evidence" value="ECO:0007669"/>
    <property type="project" value="UniProtKB-KW"/>
</dbReference>
<dbReference type="GO" id="GO:0106310">
    <property type="term" value="F:protein serine kinase activity"/>
    <property type="evidence" value="ECO:0007669"/>
    <property type="project" value="RHEA"/>
</dbReference>
<dbReference type="GO" id="GO:0004674">
    <property type="term" value="F:protein serine/threonine kinase activity"/>
    <property type="evidence" value="ECO:0007669"/>
    <property type="project" value="UniProtKB-KW"/>
</dbReference>
<dbReference type="Gene3D" id="1.10.510.10">
    <property type="entry name" value="Transferase(Phosphotransferase) domain 1"/>
    <property type="match status" value="2"/>
</dbReference>
<dbReference type="InterPro" id="IPR008615">
    <property type="entry name" value="FNIP"/>
</dbReference>
<dbReference type="InterPro" id="IPR011009">
    <property type="entry name" value="Kinase-like_dom_sf"/>
</dbReference>
<dbReference type="InterPro" id="IPR000719">
    <property type="entry name" value="Prot_kinase_dom"/>
</dbReference>
<dbReference type="InterPro" id="IPR017441">
    <property type="entry name" value="Protein_kinase_ATP_BS"/>
</dbReference>
<dbReference type="InterPro" id="IPR008271">
    <property type="entry name" value="Ser/Thr_kinase_AS"/>
</dbReference>
<dbReference type="InterPro" id="IPR051251">
    <property type="entry name" value="STK_FNIP-Repeat"/>
</dbReference>
<dbReference type="PANTHER" id="PTHR32134">
    <property type="entry name" value="FNIP REPEAT-CONTAINING PROTEIN"/>
    <property type="match status" value="1"/>
</dbReference>
<dbReference type="PANTHER" id="PTHR32134:SF169">
    <property type="entry name" value="FNIP REPEAT-CONTAINING PROTEIN-RELATED"/>
    <property type="match status" value="1"/>
</dbReference>
<dbReference type="Pfam" id="PF05725">
    <property type="entry name" value="FNIP"/>
    <property type="match status" value="6"/>
</dbReference>
<dbReference type="Pfam" id="PF00069">
    <property type="entry name" value="Pkinase"/>
    <property type="match status" value="2"/>
</dbReference>
<dbReference type="SMART" id="SM00220">
    <property type="entry name" value="S_TKc"/>
    <property type="match status" value="1"/>
</dbReference>
<dbReference type="SUPFAM" id="SSF52058">
    <property type="entry name" value="L domain-like"/>
    <property type="match status" value="1"/>
</dbReference>
<dbReference type="SUPFAM" id="SSF56112">
    <property type="entry name" value="Protein kinase-like (PK-like)"/>
    <property type="match status" value="1"/>
</dbReference>
<dbReference type="PROSITE" id="PS00107">
    <property type="entry name" value="PROTEIN_KINASE_ATP"/>
    <property type="match status" value="1"/>
</dbReference>
<dbReference type="PROSITE" id="PS50011">
    <property type="entry name" value="PROTEIN_KINASE_DOM"/>
    <property type="match status" value="1"/>
</dbReference>
<dbReference type="PROSITE" id="PS00108">
    <property type="entry name" value="PROTEIN_KINASE_ST"/>
    <property type="match status" value="1"/>
</dbReference>
<protein>
    <recommendedName>
        <fullName evidence="3">Probable serine/threonine-protein kinase fnkA</fullName>
        <ecNumber>2.7.11.1</ecNumber>
    </recommendedName>
    <alternativeName>
        <fullName>FNIP repeat-containing protein A</fullName>
    </alternativeName>
</protein>
<keyword id="KW-0067">ATP-binding</keyword>
<keyword id="KW-0418">Kinase</keyword>
<keyword id="KW-0460">Magnesium</keyword>
<keyword id="KW-0479">Metal-binding</keyword>
<keyword id="KW-0547">Nucleotide-binding</keyword>
<keyword id="KW-1185">Reference proteome</keyword>
<keyword id="KW-0677">Repeat</keyword>
<keyword id="KW-0723">Serine/threonine-protein kinase</keyword>
<keyword id="KW-0808">Transferase</keyword>
<accession>Q869L4</accession>
<accession>Q553F7</accession>
<feature type="chain" id="PRO_0000379437" description="Probable serine/threonine-protein kinase fnkA">
    <location>
        <begin position="1"/>
        <end position="793"/>
    </location>
</feature>
<feature type="domain" description="Protein kinase" evidence="1 5">
    <location>
        <begin position="11"/>
        <end position="358"/>
    </location>
</feature>
<feature type="repeat" description="FNIP 1" evidence="4">
    <location>
        <begin position="403"/>
        <end position="444"/>
    </location>
</feature>
<feature type="repeat" description="FNIP 2" evidence="4">
    <location>
        <begin position="470"/>
        <end position="514"/>
    </location>
</feature>
<feature type="repeat" description="FNIP 3" evidence="4">
    <location>
        <begin position="515"/>
        <end position="557"/>
    </location>
</feature>
<feature type="repeat" description="FNIP 4" evidence="4">
    <location>
        <begin position="558"/>
        <end position="601"/>
    </location>
</feature>
<feature type="repeat" description="FNIP 5" evidence="4">
    <location>
        <begin position="691"/>
        <end position="733"/>
    </location>
</feature>
<feature type="active site" description="Proton acceptor" evidence="1 5 6">
    <location>
        <position position="138"/>
    </location>
</feature>
<feature type="binding site" evidence="5">
    <location>
        <begin position="17"/>
        <end position="25"/>
    </location>
    <ligand>
        <name>ATP</name>
        <dbReference type="ChEBI" id="CHEBI:30616"/>
    </ligand>
</feature>
<feature type="binding site" evidence="1 5">
    <location>
        <position position="46"/>
    </location>
    <ligand>
        <name>ATP</name>
        <dbReference type="ChEBI" id="CHEBI:30616"/>
    </ligand>
</feature>
<sequence>MKKLVHKESQWEILSQLGTGAFGRVVKAKKINCDGTGIIIDICAIKIIKKSVFTKNEIEILKQLDHPLIVKYYGYGVGEIDDNIYIYMEYIDGYPVSSILRKQPKNQFPEDIISKIVIDLALILSYIHDNERKIIHRDLKCDNIMLVNDNTHSCDVNGNCSRNGGGSAKSANQSFFTEDCVCNVNGSGTDENCKSCKLKSKPIREIQGSCESCGSDLEQDSSSSSSSSSSTINNGQSSTCRLINCIYSVSKKIKLIDFGLSKGCDGDSKYYSLVGTSTHMPPEVALRNNTACRKSDIWSLGCTIIEMAGGNLFEKDIHGKPKIPDHLSASCKNFIQRCLTIDPNHRDDIINLISHNFIDRNRINEEIKEDISKSKIQFDDEFNEIISPGDLDSVNEVVFGFDFNQTIIPGTMNSVKKIEFGGSFNKELLIDSLPSATSITFGARFNNGNKPFAIGAIPSTCKSITFGWTYNQPFYPGILPNSLKKLIFQEGGDFNRILEVGSLPSSITTLILGDYDQKIEKGVLPSSLTILELGGEFNQPLEGSIPDSVTSLTLGYRFNKALTENCIPPNCKFLKFGSNFNKDLSPGILPSSIETLILGYCFNKELVEGSLPLSITTLIYEHRDNQKKVSYDYKEVTNLSKDLEENEIIPLTPESLPESITKLTIGKNQNHVIEFNCLPPDLQCLKYHGGFIRPLIPRDLPSSITSVKLYNYNYEIKKTSIPKSVTSLQLGSRHNKFTQIQSLSNFHPNMRDLKIYINDDDIDIYNLKDIIPQTITSLIINGDNIDLPIGIEN</sequence>
<gene>
    <name evidence="7" type="primary">fnkA</name>
    <name evidence="3" type="synonym">FNIPK-A</name>
    <name type="ORF">DDB_G0275561</name>
</gene>